<organism>
    <name type="scientific">Oryza sativa subsp. japonica</name>
    <name type="common">Rice</name>
    <dbReference type="NCBI Taxonomy" id="39947"/>
    <lineage>
        <taxon>Eukaryota</taxon>
        <taxon>Viridiplantae</taxon>
        <taxon>Streptophyta</taxon>
        <taxon>Embryophyta</taxon>
        <taxon>Tracheophyta</taxon>
        <taxon>Spermatophyta</taxon>
        <taxon>Magnoliopsida</taxon>
        <taxon>Liliopsida</taxon>
        <taxon>Poales</taxon>
        <taxon>Poaceae</taxon>
        <taxon>BOP clade</taxon>
        <taxon>Oryzoideae</taxon>
        <taxon>Oryzeae</taxon>
        <taxon>Oryzinae</taxon>
        <taxon>Oryza</taxon>
        <taxon>Oryza sativa</taxon>
    </lineage>
</organism>
<sequence>MARKKIREYDSKRLLKEHLKRLAGIDLQILSAQVTQSTDFTELVNQQPWLSTMKLVVKPDMLFGKRGKSGLVALNLDIAQVKEFVKERLGVEVEMGGCKAPITTFIVEPFVPHDQEYYLSIVSERLGSTISFSECGGIEIEENWDKVKTIFLPTEKPMTPDACAPLIATLPLEARGKIGDFIKGVFAVFQDLDFSFLEMNPFTIVNGEPYPLDMRGELDDTAAFKNFKKWGNIEFPLPFGRVLSSTEGFIHDLDEKTSASLKFTVLNPKGRIWTMVAGGGASVIYADTVGDLGYASELGNYAEYSGAPNEEEVLQYARVVLDCATADPDGRKRALLIGGGIANFTDVGATFSGIIRALREKESKLKAARMHIYVRRGGPNYQTGLAKMRKLGAELGVPIEVYGPEATMTGICKQAIECVMAAA</sequence>
<name>ACLA2_ORYSJ</name>
<dbReference type="EC" id="2.3.3.8"/>
<dbReference type="EMBL" id="DP000010">
    <property type="protein sequence ID" value="ABA95548.2"/>
    <property type="molecule type" value="Genomic_DNA"/>
</dbReference>
<dbReference type="EMBL" id="DP000010">
    <property type="protein sequence ID" value="ABA95549.2"/>
    <property type="status" value="ALT_SEQ"/>
    <property type="molecule type" value="Genomic_DNA"/>
</dbReference>
<dbReference type="EMBL" id="AP008217">
    <property type="status" value="NOT_ANNOTATED_CDS"/>
    <property type="molecule type" value="Genomic_DNA"/>
</dbReference>
<dbReference type="EMBL" id="AP014967">
    <property type="protein sequence ID" value="BAT15348.1"/>
    <property type="molecule type" value="Genomic_DNA"/>
</dbReference>
<dbReference type="EMBL" id="AK069911">
    <property type="status" value="NOT_ANNOTATED_CDS"/>
    <property type="molecule type" value="mRNA"/>
</dbReference>
<dbReference type="SMR" id="Q2QZ86"/>
<dbReference type="FunCoup" id="Q2QZ86">
    <property type="interactions" value="252"/>
</dbReference>
<dbReference type="STRING" id="39947.Q2QZ86"/>
<dbReference type="PaxDb" id="39947-Q2QZ86"/>
<dbReference type="EnsemblPlants" id="Os11t0696200-01">
    <property type="protein sequence ID" value="Os11t0696200-01"/>
    <property type="gene ID" value="Os11g0696200"/>
</dbReference>
<dbReference type="Gramene" id="Os11t0696200-01">
    <property type="protein sequence ID" value="Os11t0696200-01"/>
    <property type="gene ID" value="Os11g0696200"/>
</dbReference>
<dbReference type="eggNOG" id="KOG1254">
    <property type="taxonomic scope" value="Eukaryota"/>
</dbReference>
<dbReference type="HOGENOM" id="CLU_006587_3_1_1"/>
<dbReference type="InParanoid" id="Q2QZ86"/>
<dbReference type="OMA" id="SMASEAC"/>
<dbReference type="BRENDA" id="2.3.3.8">
    <property type="organism ID" value="8948"/>
</dbReference>
<dbReference type="Proteomes" id="UP000000763">
    <property type="component" value="Chromosome 11"/>
</dbReference>
<dbReference type="Proteomes" id="UP000059680">
    <property type="component" value="Chromosome 11"/>
</dbReference>
<dbReference type="GO" id="GO:0005829">
    <property type="term" value="C:cytosol"/>
    <property type="evidence" value="ECO:0007669"/>
    <property type="project" value="UniProtKB-SubCell"/>
</dbReference>
<dbReference type="GO" id="GO:0005524">
    <property type="term" value="F:ATP binding"/>
    <property type="evidence" value="ECO:0007669"/>
    <property type="project" value="UniProtKB-KW"/>
</dbReference>
<dbReference type="GO" id="GO:0003878">
    <property type="term" value="F:ATP citrate synthase activity"/>
    <property type="evidence" value="ECO:0007669"/>
    <property type="project" value="UniProtKB-EC"/>
</dbReference>
<dbReference type="GO" id="GO:0006629">
    <property type="term" value="P:lipid metabolic process"/>
    <property type="evidence" value="ECO:0007669"/>
    <property type="project" value="UniProtKB-KW"/>
</dbReference>
<dbReference type="FunFam" id="3.30.470.110:FF:000002">
    <property type="entry name" value="ATP-citrate synthase alpha chain protein"/>
    <property type="match status" value="1"/>
</dbReference>
<dbReference type="FunFam" id="3.40.50.261:FF:000008">
    <property type="entry name" value="ATP-citrate synthase alpha chain protein"/>
    <property type="match status" value="1"/>
</dbReference>
<dbReference type="FunFam" id="3.30.470.20:FF:000127">
    <property type="entry name" value="ATP-citrate synthase alpha chain protein 3"/>
    <property type="match status" value="1"/>
</dbReference>
<dbReference type="Gene3D" id="3.30.470.110">
    <property type="match status" value="1"/>
</dbReference>
<dbReference type="Gene3D" id="3.40.50.261">
    <property type="entry name" value="Succinyl-CoA synthetase domains"/>
    <property type="match status" value="1"/>
</dbReference>
<dbReference type="InterPro" id="IPR032263">
    <property type="entry name" value="Citrate-bd"/>
</dbReference>
<dbReference type="InterPro" id="IPR056749">
    <property type="entry name" value="Citrate_synth_N"/>
</dbReference>
<dbReference type="InterPro" id="IPR016102">
    <property type="entry name" value="Succinyl-CoA_synth-like"/>
</dbReference>
<dbReference type="PANTHER" id="PTHR11815:SF10">
    <property type="entry name" value="SUCCINATE--COA LIGASE [GDP-FORMING] SUBUNIT BETA, MITOCHONDRIAL"/>
    <property type="match status" value="1"/>
</dbReference>
<dbReference type="PANTHER" id="PTHR11815">
    <property type="entry name" value="SUCCINYL-COA SYNTHETASE BETA CHAIN"/>
    <property type="match status" value="1"/>
</dbReference>
<dbReference type="Pfam" id="PF16114">
    <property type="entry name" value="Citrate_bind"/>
    <property type="match status" value="1"/>
</dbReference>
<dbReference type="Pfam" id="PF24948">
    <property type="entry name" value="Citrate_synth_N"/>
    <property type="match status" value="1"/>
</dbReference>
<dbReference type="SUPFAM" id="SSF56059">
    <property type="entry name" value="Glutathione synthetase ATP-binding domain-like"/>
    <property type="match status" value="1"/>
</dbReference>
<dbReference type="SUPFAM" id="SSF52210">
    <property type="entry name" value="Succinyl-CoA synthetase domains"/>
    <property type="match status" value="1"/>
</dbReference>
<evidence type="ECO:0000250" key="1"/>
<evidence type="ECO:0000305" key="2"/>
<gene>
    <name type="primary">ACLA-2</name>
    <name type="ordered locus">Os11g0696200</name>
    <name type="ordered locus">LOC_Os11g47330</name>
</gene>
<proteinExistence type="evidence at transcript level"/>
<comment type="function">
    <text evidence="1">ATP citrate-lyase is the primary enzyme responsible for the synthesis of cytosolic acetyl-CoA, used for the elongation of fatty acids and biosynthesis of isoprenoids, flavonoids and malonated derivatives. May supply substrate to the cytosolic acetyl-CoA carboxylase, which generates the malonyl-CoA used for the synthesis of a multitude of compounds, including very long chain fatty acids and flavonoids. In contrast to all known animal ACL enzymes having a homomeric structure, plant ACLs are composed of alpha and beta chains (By similarity).</text>
</comment>
<comment type="catalytic activity">
    <reaction>
        <text>oxaloacetate + acetyl-CoA + ADP + phosphate = citrate + ATP + CoA</text>
        <dbReference type="Rhea" id="RHEA:21160"/>
        <dbReference type="ChEBI" id="CHEBI:16452"/>
        <dbReference type="ChEBI" id="CHEBI:16947"/>
        <dbReference type="ChEBI" id="CHEBI:30616"/>
        <dbReference type="ChEBI" id="CHEBI:43474"/>
        <dbReference type="ChEBI" id="CHEBI:57287"/>
        <dbReference type="ChEBI" id="CHEBI:57288"/>
        <dbReference type="ChEBI" id="CHEBI:456216"/>
        <dbReference type="EC" id="2.3.3.8"/>
    </reaction>
</comment>
<comment type="subunit">
    <text evidence="1">Heterooctamer of 4 alpha and 4 beta chains.</text>
</comment>
<comment type="subcellular location">
    <subcellularLocation>
        <location evidence="1">Cytoplasm</location>
        <location evidence="1">Cytosol</location>
    </subcellularLocation>
</comment>
<comment type="similarity">
    <text evidence="2">Belongs to the succinate/malate CoA ligase beta subunit family.</text>
</comment>
<comment type="sequence caution" evidence="2">
    <conflict type="erroneous gene model prediction">
        <sequence resource="EMBL-CDS" id="ABA95549"/>
    </conflict>
</comment>
<keyword id="KW-0012">Acyltransferase</keyword>
<keyword id="KW-0067">ATP-binding</keyword>
<keyword id="KW-0963">Cytoplasm</keyword>
<keyword id="KW-0444">Lipid biosynthesis</keyword>
<keyword id="KW-0443">Lipid metabolism</keyword>
<keyword id="KW-0547">Nucleotide-binding</keyword>
<keyword id="KW-1185">Reference proteome</keyword>
<keyword id="KW-0808">Transferase</keyword>
<reference key="1">
    <citation type="journal article" date="2005" name="BMC Biol.">
        <title>The sequence of rice chromosomes 11 and 12, rich in disease resistance genes and recent gene duplications.</title>
        <authorList>
            <consortium name="The rice chromosomes 11 and 12 sequencing consortia"/>
        </authorList>
    </citation>
    <scope>NUCLEOTIDE SEQUENCE [LARGE SCALE GENOMIC DNA]</scope>
    <source>
        <strain>cv. Nipponbare</strain>
    </source>
</reference>
<reference key="2">
    <citation type="journal article" date="2005" name="Nature">
        <title>The map-based sequence of the rice genome.</title>
        <authorList>
            <consortium name="International rice genome sequencing project (IRGSP)"/>
        </authorList>
    </citation>
    <scope>NUCLEOTIDE SEQUENCE [LARGE SCALE GENOMIC DNA]</scope>
    <source>
        <strain>cv. Nipponbare</strain>
    </source>
</reference>
<reference key="3">
    <citation type="journal article" date="2008" name="Nucleic Acids Res.">
        <title>The rice annotation project database (RAP-DB): 2008 update.</title>
        <authorList>
            <consortium name="The rice annotation project (RAP)"/>
        </authorList>
    </citation>
    <scope>GENOME REANNOTATION</scope>
    <source>
        <strain>cv. Nipponbare</strain>
    </source>
</reference>
<reference key="4">
    <citation type="journal article" date="2013" name="Rice">
        <title>Improvement of the Oryza sativa Nipponbare reference genome using next generation sequence and optical map data.</title>
        <authorList>
            <person name="Kawahara Y."/>
            <person name="de la Bastide M."/>
            <person name="Hamilton J.P."/>
            <person name="Kanamori H."/>
            <person name="McCombie W.R."/>
            <person name="Ouyang S."/>
            <person name="Schwartz D.C."/>
            <person name="Tanaka T."/>
            <person name="Wu J."/>
            <person name="Zhou S."/>
            <person name="Childs K.L."/>
            <person name="Davidson R.M."/>
            <person name="Lin H."/>
            <person name="Quesada-Ocampo L."/>
            <person name="Vaillancourt B."/>
            <person name="Sakai H."/>
            <person name="Lee S.S."/>
            <person name="Kim J."/>
            <person name="Numa H."/>
            <person name="Itoh T."/>
            <person name="Buell C.R."/>
            <person name="Matsumoto T."/>
        </authorList>
    </citation>
    <scope>GENOME REANNOTATION</scope>
    <source>
        <strain>cv. Nipponbare</strain>
    </source>
</reference>
<reference key="5">
    <citation type="journal article" date="2003" name="Science">
        <title>Collection, mapping, and annotation of over 28,000 cDNA clones from japonica rice.</title>
        <authorList>
            <consortium name="The rice full-length cDNA consortium"/>
        </authorList>
    </citation>
    <scope>NUCLEOTIDE SEQUENCE [LARGE SCALE MRNA]</scope>
    <source>
        <strain>cv. Nipponbare</strain>
    </source>
</reference>
<protein>
    <recommendedName>
        <fullName>ATP-citrate synthase alpha chain protein 2</fullName>
        <shortName>ATP-citrate synthase A-2</shortName>
        <ecNumber>2.3.3.8</ecNumber>
    </recommendedName>
    <alternativeName>
        <fullName>ATP-citrate lyase A-2</fullName>
    </alternativeName>
    <alternativeName>
        <fullName>Citrate cleavage enzyme A-2</fullName>
    </alternativeName>
</protein>
<accession>Q2QZ86</accession>
<accession>A0A0P0Y621</accession>
<accession>Q2QZ87</accession>
<feature type="chain" id="PRO_0000412219" description="ATP-citrate synthase alpha chain protein 2">
    <location>
        <begin position="1"/>
        <end position="423"/>
    </location>
</feature>
<feature type="binding site" evidence="1">
    <location>
        <position position="343"/>
    </location>
    <ligand>
        <name>citrate</name>
        <dbReference type="ChEBI" id="CHEBI:16947"/>
    </ligand>
</feature>
<feature type="binding site" evidence="1">
    <location>
        <position position="345"/>
    </location>
    <ligand>
        <name>citrate</name>
        <dbReference type="ChEBI" id="CHEBI:16947"/>
    </ligand>
</feature>
<feature type="binding site" evidence="1">
    <location>
        <position position="376"/>
    </location>
    <ligand>
        <name>citrate</name>
        <dbReference type="ChEBI" id="CHEBI:16947"/>
    </ligand>
</feature>
<feature type="sequence conflict" description="In Ref. 5; AK069911." evidence="2" ref="5">
    <original>T</original>
    <variation>A</variation>
    <location>
        <position position="409"/>
    </location>
</feature>